<evidence type="ECO:0000250" key="1"/>
<evidence type="ECO:0000255" key="2"/>
<evidence type="ECO:0000269" key="3">
    <source>
    </source>
</evidence>
<evidence type="ECO:0000305" key="4"/>
<reference key="1">
    <citation type="journal article" date="1990" name="Dev. Biol.">
        <title>Poly(A) metabolism and polysomal recruitment of maternal mRNAs during early Xenopus development.</title>
        <authorList>
            <person name="Paris J."/>
            <person name="Philippe M."/>
        </authorList>
    </citation>
    <scope>NUCLEOTIDE SEQUENCE [MRNA]</scope>
</reference>
<reference key="2">
    <citation type="submission" date="2004-04" db="EMBL/GenBank/DDBJ databases">
        <authorList>
            <consortium name="NIH - Xenopus Gene Collection (XGC) project"/>
        </authorList>
    </citation>
    <scope>NUCLEOTIDE SEQUENCE [LARGE SCALE MRNA]</scope>
    <source>
        <tissue>Ovary</tissue>
    </source>
</reference>
<reference key="3">
    <citation type="journal article" date="2005" name="Dev. Biol.">
        <title>Identification of target genes for the Xenopus Hes-related protein XHR1, a prepattern factor specifying the midbrain-hindbrain boundary.</title>
        <authorList>
            <person name="Takada H."/>
            <person name="Hattori D."/>
            <person name="Kitayama A."/>
            <person name="Ueno N."/>
            <person name="Taira M."/>
        </authorList>
    </citation>
    <scope>DEVELOPMENTAL STAGE</scope>
</reference>
<sequence length="102" mass="11811">MSVFYPIHCTDYLRSAEMTEVIMNTQSMDEIGLSPRKDSYQIFPDPSDFERCCKLKDRLPSIVVEPTEGDVESGELRWPPEEFVVDEDKEGTCDQTKKENEQ</sequence>
<feature type="chain" id="PRO_0000324806" description="Protein LBH">
    <location>
        <begin position="1"/>
        <end position="102"/>
    </location>
</feature>
<feature type="domain" description="LBH" evidence="2">
    <location>
        <begin position="18"/>
        <end position="101"/>
    </location>
</feature>
<comment type="function">
    <text evidence="1">Transcriptional activator.</text>
</comment>
<comment type="subcellular location">
    <subcellularLocation>
        <location evidence="1">Nucleus</location>
    </subcellularLocation>
    <subcellularLocation>
        <location evidence="1">Cytoplasm</location>
    </subcellularLocation>
</comment>
<comment type="developmental stage">
    <text evidence="3">Expressed in anterior neural plate.</text>
</comment>
<comment type="similarity">
    <text evidence="4">Belongs to the LBH family.</text>
</comment>
<proteinExistence type="evidence at transcript level"/>
<keyword id="KW-0963">Cytoplasm</keyword>
<keyword id="KW-0539">Nucleus</keyword>
<keyword id="KW-1185">Reference proteome</keyword>
<keyword id="KW-0804">Transcription</keyword>
<keyword id="KW-0805">Transcription regulation</keyword>
<accession>Q91715</accession>
<gene>
    <name type="primary">lbh</name>
    <name type="synonym">cl2</name>
</gene>
<name>LBH_XENLA</name>
<protein>
    <recommendedName>
        <fullName>Protein LBH</fullName>
    </recommendedName>
    <alternativeName>
        <fullName>Cleavage 2 protein</fullName>
    </alternativeName>
    <alternativeName>
        <fullName>XLCL2</fullName>
    </alternativeName>
</protein>
<dbReference type="EMBL" id="Z14122">
    <property type="protein sequence ID" value="CAA78495.1"/>
    <property type="molecule type" value="mRNA"/>
</dbReference>
<dbReference type="EMBL" id="BC068648">
    <property type="protein sequence ID" value="AAH68648.1"/>
    <property type="molecule type" value="mRNA"/>
</dbReference>
<dbReference type="PIR" id="S52241">
    <property type="entry name" value="S52241"/>
</dbReference>
<dbReference type="RefSeq" id="NP_001081507.1">
    <property type="nucleotide sequence ID" value="NM_001088038.1"/>
</dbReference>
<dbReference type="GeneID" id="397879"/>
<dbReference type="KEGG" id="xla:397879"/>
<dbReference type="AGR" id="Xenbase:XB-GENE-5945566"/>
<dbReference type="CTD" id="397879"/>
<dbReference type="Xenbase" id="XB-GENE-5945566">
    <property type="gene designation" value="lbh.L"/>
</dbReference>
<dbReference type="OrthoDB" id="8937789at2759"/>
<dbReference type="Proteomes" id="UP000186698">
    <property type="component" value="Chromosome 5L"/>
</dbReference>
<dbReference type="Bgee" id="397879">
    <property type="expression patterns" value="Expressed in spleen and 19 other cell types or tissues"/>
</dbReference>
<dbReference type="GO" id="GO:0005737">
    <property type="term" value="C:cytoplasm"/>
    <property type="evidence" value="ECO:0007669"/>
    <property type="project" value="UniProtKB-SubCell"/>
</dbReference>
<dbReference type="GO" id="GO:0005634">
    <property type="term" value="C:nucleus"/>
    <property type="evidence" value="ECO:0000318"/>
    <property type="project" value="GO_Central"/>
</dbReference>
<dbReference type="GO" id="GO:0045893">
    <property type="term" value="P:positive regulation of DNA-templated transcription"/>
    <property type="evidence" value="ECO:0000318"/>
    <property type="project" value="GO_Central"/>
</dbReference>
<dbReference type="InterPro" id="IPR013294">
    <property type="entry name" value="LBH"/>
</dbReference>
<dbReference type="InterPro" id="IPR038990">
    <property type="entry name" value="LBH_dom"/>
</dbReference>
<dbReference type="InterPro" id="IPR042945">
    <property type="entry name" value="LBH_dom_prot"/>
</dbReference>
<dbReference type="PANTHER" id="PTHR14987:SF2">
    <property type="entry name" value="PROTEIN LBH"/>
    <property type="match status" value="1"/>
</dbReference>
<dbReference type="PANTHER" id="PTHR14987">
    <property type="entry name" value="PROTEIN LBH-RELATED"/>
    <property type="match status" value="1"/>
</dbReference>
<dbReference type="Pfam" id="PF15317">
    <property type="entry name" value="Lbh"/>
    <property type="match status" value="1"/>
</dbReference>
<dbReference type="PIRSF" id="PIRSF008130">
    <property type="entry name" value="LBH"/>
    <property type="match status" value="1"/>
</dbReference>
<dbReference type="PRINTS" id="PR01881">
    <property type="entry name" value="LBHPROTEIN"/>
</dbReference>
<organism>
    <name type="scientific">Xenopus laevis</name>
    <name type="common">African clawed frog</name>
    <dbReference type="NCBI Taxonomy" id="8355"/>
    <lineage>
        <taxon>Eukaryota</taxon>
        <taxon>Metazoa</taxon>
        <taxon>Chordata</taxon>
        <taxon>Craniata</taxon>
        <taxon>Vertebrata</taxon>
        <taxon>Euteleostomi</taxon>
        <taxon>Amphibia</taxon>
        <taxon>Batrachia</taxon>
        <taxon>Anura</taxon>
        <taxon>Pipoidea</taxon>
        <taxon>Pipidae</taxon>
        <taxon>Xenopodinae</taxon>
        <taxon>Xenopus</taxon>
        <taxon>Xenopus</taxon>
    </lineage>
</organism>